<reference key="1">
    <citation type="journal article" date="2004" name="Proc. Natl. Acad. Sci. U.S.A.">
        <title>Genome sequence of the deep-sea gamma-proteobacterium Idiomarina loihiensis reveals amino acid fermentation as a source of carbon and energy.</title>
        <authorList>
            <person name="Hou S."/>
            <person name="Saw J.H."/>
            <person name="Lee K.S."/>
            <person name="Freitas T.A."/>
            <person name="Belisle C."/>
            <person name="Kawarabayasi Y."/>
            <person name="Donachie S.P."/>
            <person name="Pikina A."/>
            <person name="Galperin M.Y."/>
            <person name="Koonin E.V."/>
            <person name="Makarova K.S."/>
            <person name="Omelchenko M.V."/>
            <person name="Sorokin A."/>
            <person name="Wolf Y.I."/>
            <person name="Li Q.X."/>
            <person name="Keum Y.S."/>
            <person name="Campbell S."/>
            <person name="Denery J."/>
            <person name="Aizawa S."/>
            <person name="Shibata S."/>
            <person name="Malahoff A."/>
            <person name="Alam M."/>
        </authorList>
    </citation>
    <scope>NUCLEOTIDE SEQUENCE [LARGE SCALE GENOMIC DNA]</scope>
    <source>
        <strain>ATCC BAA-735 / DSM 15497 / L2-TR</strain>
    </source>
</reference>
<gene>
    <name evidence="1" type="primary">serS</name>
    <name type="ordered locus">IL0663</name>
</gene>
<evidence type="ECO:0000255" key="1">
    <source>
        <dbReference type="HAMAP-Rule" id="MF_00176"/>
    </source>
</evidence>
<protein>
    <recommendedName>
        <fullName evidence="1">Serine--tRNA ligase</fullName>
        <ecNumber evidence="1">6.1.1.11</ecNumber>
    </recommendedName>
    <alternativeName>
        <fullName evidence="1">Seryl-tRNA synthetase</fullName>
        <shortName evidence="1">SerRS</shortName>
    </alternativeName>
    <alternativeName>
        <fullName evidence="1">Seryl-tRNA(Ser/Sec) synthetase</fullName>
    </alternativeName>
</protein>
<accession>Q5R0B0</accession>
<keyword id="KW-0030">Aminoacyl-tRNA synthetase</keyword>
<keyword id="KW-0067">ATP-binding</keyword>
<keyword id="KW-0963">Cytoplasm</keyword>
<keyword id="KW-0436">Ligase</keyword>
<keyword id="KW-0547">Nucleotide-binding</keyword>
<keyword id="KW-0648">Protein biosynthesis</keyword>
<keyword id="KW-1185">Reference proteome</keyword>
<sequence length="430" mass="48421">MLDAKYFREELDQTAKKLATRGFDLDVAKLQKLEEQRKEVQVRTEQLQAERNSRSKAIGKAKASGEDIQPLLDAVSDLGEQLDNAKEELKVIQQELNDIIMGVPNLPADEVPEGADEDENQEVLTWGKPKSFDFEVKDHVDLGEALAKGMDFETAAKLTGARFVVMRGGIARMHRALTQFMLDLHTDEHGYLETYVPYMVNQDSLYGTGQLPKFGKDLFHIEGESQDQIPMSLIPTAEVPLTNLYRDEIADEEELPLKFTAHTPCFRSEAGSHGRDTRGLIRQHQFDKVELVWLVKPEQSMDALEQLTGHAETVLQKLELPYRKVLLCTGDMGFGAAKTYDLEVWLPAQEAYREISSCSNMQDFQARRMQARFRRKGAKKPELMHTLNGSGLAVGRALVAVLENYQQEDGSIVVPEVLRPYMGGVEVLKA</sequence>
<proteinExistence type="inferred from homology"/>
<feature type="chain" id="PRO_0000122061" description="Serine--tRNA ligase">
    <location>
        <begin position="1"/>
        <end position="430"/>
    </location>
</feature>
<feature type="binding site" evidence="1">
    <location>
        <begin position="236"/>
        <end position="238"/>
    </location>
    <ligand>
        <name>L-serine</name>
        <dbReference type="ChEBI" id="CHEBI:33384"/>
    </ligand>
</feature>
<feature type="binding site" evidence="1">
    <location>
        <begin position="267"/>
        <end position="269"/>
    </location>
    <ligand>
        <name>ATP</name>
        <dbReference type="ChEBI" id="CHEBI:30616"/>
    </ligand>
</feature>
<feature type="binding site" evidence="1">
    <location>
        <position position="290"/>
    </location>
    <ligand>
        <name>L-serine</name>
        <dbReference type="ChEBI" id="CHEBI:33384"/>
    </ligand>
</feature>
<feature type="binding site" evidence="1">
    <location>
        <begin position="354"/>
        <end position="357"/>
    </location>
    <ligand>
        <name>ATP</name>
        <dbReference type="ChEBI" id="CHEBI:30616"/>
    </ligand>
</feature>
<feature type="binding site" evidence="1">
    <location>
        <position position="390"/>
    </location>
    <ligand>
        <name>L-serine</name>
        <dbReference type="ChEBI" id="CHEBI:33384"/>
    </ligand>
</feature>
<name>SYS_IDILO</name>
<dbReference type="EC" id="6.1.1.11" evidence="1"/>
<dbReference type="EMBL" id="AE017340">
    <property type="protein sequence ID" value="AAV81504.1"/>
    <property type="molecule type" value="Genomic_DNA"/>
</dbReference>
<dbReference type="RefSeq" id="WP_011233916.1">
    <property type="nucleotide sequence ID" value="NC_006512.1"/>
</dbReference>
<dbReference type="SMR" id="Q5R0B0"/>
<dbReference type="STRING" id="283942.IL0663"/>
<dbReference type="GeneID" id="41335818"/>
<dbReference type="KEGG" id="ilo:IL0663"/>
<dbReference type="eggNOG" id="COG0172">
    <property type="taxonomic scope" value="Bacteria"/>
</dbReference>
<dbReference type="HOGENOM" id="CLU_023797_1_1_6"/>
<dbReference type="OrthoDB" id="9804647at2"/>
<dbReference type="UniPathway" id="UPA00906">
    <property type="reaction ID" value="UER00895"/>
</dbReference>
<dbReference type="Proteomes" id="UP000001171">
    <property type="component" value="Chromosome"/>
</dbReference>
<dbReference type="GO" id="GO:0005737">
    <property type="term" value="C:cytoplasm"/>
    <property type="evidence" value="ECO:0007669"/>
    <property type="project" value="UniProtKB-SubCell"/>
</dbReference>
<dbReference type="GO" id="GO:0005524">
    <property type="term" value="F:ATP binding"/>
    <property type="evidence" value="ECO:0007669"/>
    <property type="project" value="UniProtKB-UniRule"/>
</dbReference>
<dbReference type="GO" id="GO:0004828">
    <property type="term" value="F:serine-tRNA ligase activity"/>
    <property type="evidence" value="ECO:0007669"/>
    <property type="project" value="UniProtKB-UniRule"/>
</dbReference>
<dbReference type="GO" id="GO:0016260">
    <property type="term" value="P:selenocysteine biosynthetic process"/>
    <property type="evidence" value="ECO:0007669"/>
    <property type="project" value="UniProtKB-UniRule"/>
</dbReference>
<dbReference type="GO" id="GO:0006434">
    <property type="term" value="P:seryl-tRNA aminoacylation"/>
    <property type="evidence" value="ECO:0007669"/>
    <property type="project" value="UniProtKB-UniRule"/>
</dbReference>
<dbReference type="CDD" id="cd00770">
    <property type="entry name" value="SerRS_core"/>
    <property type="match status" value="1"/>
</dbReference>
<dbReference type="Gene3D" id="3.30.930.10">
    <property type="entry name" value="Bira Bifunctional Protein, Domain 2"/>
    <property type="match status" value="1"/>
</dbReference>
<dbReference type="Gene3D" id="1.10.287.40">
    <property type="entry name" value="Serine-tRNA synthetase, tRNA binding domain"/>
    <property type="match status" value="1"/>
</dbReference>
<dbReference type="HAMAP" id="MF_00176">
    <property type="entry name" value="Ser_tRNA_synth_type1"/>
    <property type="match status" value="1"/>
</dbReference>
<dbReference type="InterPro" id="IPR002314">
    <property type="entry name" value="aa-tRNA-synt_IIb"/>
</dbReference>
<dbReference type="InterPro" id="IPR006195">
    <property type="entry name" value="aa-tRNA-synth_II"/>
</dbReference>
<dbReference type="InterPro" id="IPR045864">
    <property type="entry name" value="aa-tRNA-synth_II/BPL/LPL"/>
</dbReference>
<dbReference type="InterPro" id="IPR002317">
    <property type="entry name" value="Ser-tRNA-ligase_type_1"/>
</dbReference>
<dbReference type="InterPro" id="IPR015866">
    <property type="entry name" value="Ser-tRNA-synth_1_N"/>
</dbReference>
<dbReference type="InterPro" id="IPR042103">
    <property type="entry name" value="SerRS_1_N_sf"/>
</dbReference>
<dbReference type="InterPro" id="IPR033729">
    <property type="entry name" value="SerRS_core"/>
</dbReference>
<dbReference type="InterPro" id="IPR010978">
    <property type="entry name" value="tRNA-bd_arm"/>
</dbReference>
<dbReference type="NCBIfam" id="TIGR00414">
    <property type="entry name" value="serS"/>
    <property type="match status" value="1"/>
</dbReference>
<dbReference type="PANTHER" id="PTHR43697:SF1">
    <property type="entry name" value="SERINE--TRNA LIGASE"/>
    <property type="match status" value="1"/>
</dbReference>
<dbReference type="PANTHER" id="PTHR43697">
    <property type="entry name" value="SERYL-TRNA SYNTHETASE"/>
    <property type="match status" value="1"/>
</dbReference>
<dbReference type="Pfam" id="PF02403">
    <property type="entry name" value="Seryl_tRNA_N"/>
    <property type="match status" value="1"/>
</dbReference>
<dbReference type="Pfam" id="PF00587">
    <property type="entry name" value="tRNA-synt_2b"/>
    <property type="match status" value="1"/>
</dbReference>
<dbReference type="PIRSF" id="PIRSF001529">
    <property type="entry name" value="Ser-tRNA-synth_IIa"/>
    <property type="match status" value="1"/>
</dbReference>
<dbReference type="PRINTS" id="PR00981">
    <property type="entry name" value="TRNASYNTHSER"/>
</dbReference>
<dbReference type="SUPFAM" id="SSF55681">
    <property type="entry name" value="Class II aaRS and biotin synthetases"/>
    <property type="match status" value="1"/>
</dbReference>
<dbReference type="SUPFAM" id="SSF46589">
    <property type="entry name" value="tRNA-binding arm"/>
    <property type="match status" value="1"/>
</dbReference>
<dbReference type="PROSITE" id="PS50862">
    <property type="entry name" value="AA_TRNA_LIGASE_II"/>
    <property type="match status" value="1"/>
</dbReference>
<organism>
    <name type="scientific">Idiomarina loihiensis (strain ATCC BAA-735 / DSM 15497 / L2-TR)</name>
    <dbReference type="NCBI Taxonomy" id="283942"/>
    <lineage>
        <taxon>Bacteria</taxon>
        <taxon>Pseudomonadati</taxon>
        <taxon>Pseudomonadota</taxon>
        <taxon>Gammaproteobacteria</taxon>
        <taxon>Alteromonadales</taxon>
        <taxon>Idiomarinaceae</taxon>
        <taxon>Idiomarina</taxon>
    </lineage>
</organism>
<comment type="function">
    <text evidence="1">Catalyzes the attachment of serine to tRNA(Ser). Is also able to aminoacylate tRNA(Sec) with serine, to form the misacylated tRNA L-seryl-tRNA(Sec), which will be further converted into selenocysteinyl-tRNA(Sec).</text>
</comment>
<comment type="catalytic activity">
    <reaction evidence="1">
        <text>tRNA(Ser) + L-serine + ATP = L-seryl-tRNA(Ser) + AMP + diphosphate + H(+)</text>
        <dbReference type="Rhea" id="RHEA:12292"/>
        <dbReference type="Rhea" id="RHEA-COMP:9669"/>
        <dbReference type="Rhea" id="RHEA-COMP:9703"/>
        <dbReference type="ChEBI" id="CHEBI:15378"/>
        <dbReference type="ChEBI" id="CHEBI:30616"/>
        <dbReference type="ChEBI" id="CHEBI:33019"/>
        <dbReference type="ChEBI" id="CHEBI:33384"/>
        <dbReference type="ChEBI" id="CHEBI:78442"/>
        <dbReference type="ChEBI" id="CHEBI:78533"/>
        <dbReference type="ChEBI" id="CHEBI:456215"/>
        <dbReference type="EC" id="6.1.1.11"/>
    </reaction>
</comment>
<comment type="catalytic activity">
    <reaction evidence="1">
        <text>tRNA(Sec) + L-serine + ATP = L-seryl-tRNA(Sec) + AMP + diphosphate + H(+)</text>
        <dbReference type="Rhea" id="RHEA:42580"/>
        <dbReference type="Rhea" id="RHEA-COMP:9742"/>
        <dbReference type="Rhea" id="RHEA-COMP:10128"/>
        <dbReference type="ChEBI" id="CHEBI:15378"/>
        <dbReference type="ChEBI" id="CHEBI:30616"/>
        <dbReference type="ChEBI" id="CHEBI:33019"/>
        <dbReference type="ChEBI" id="CHEBI:33384"/>
        <dbReference type="ChEBI" id="CHEBI:78442"/>
        <dbReference type="ChEBI" id="CHEBI:78533"/>
        <dbReference type="ChEBI" id="CHEBI:456215"/>
        <dbReference type="EC" id="6.1.1.11"/>
    </reaction>
</comment>
<comment type="pathway">
    <text evidence="1">Aminoacyl-tRNA biosynthesis; selenocysteinyl-tRNA(Sec) biosynthesis; L-seryl-tRNA(Sec) from L-serine and tRNA(Sec): step 1/1.</text>
</comment>
<comment type="subunit">
    <text evidence="1">Homodimer. The tRNA molecule binds across the dimer.</text>
</comment>
<comment type="subcellular location">
    <subcellularLocation>
        <location evidence="1">Cytoplasm</location>
    </subcellularLocation>
</comment>
<comment type="domain">
    <text evidence="1">Consists of two distinct domains, a catalytic core and a N-terminal extension that is involved in tRNA binding.</text>
</comment>
<comment type="similarity">
    <text evidence="1">Belongs to the class-II aminoacyl-tRNA synthetase family. Type-1 seryl-tRNA synthetase subfamily.</text>
</comment>